<comment type="function">
    <text evidence="1">Involved in protein export. Acts as a chaperone by maintaining the newly synthesized protein in an open conformation. Functions as a peptidyl-prolyl cis-trans isomerase.</text>
</comment>
<comment type="catalytic activity">
    <reaction evidence="1">
        <text>[protein]-peptidylproline (omega=180) = [protein]-peptidylproline (omega=0)</text>
        <dbReference type="Rhea" id="RHEA:16237"/>
        <dbReference type="Rhea" id="RHEA-COMP:10747"/>
        <dbReference type="Rhea" id="RHEA-COMP:10748"/>
        <dbReference type="ChEBI" id="CHEBI:83833"/>
        <dbReference type="ChEBI" id="CHEBI:83834"/>
        <dbReference type="EC" id="5.2.1.8"/>
    </reaction>
</comment>
<comment type="subcellular location">
    <subcellularLocation>
        <location>Cytoplasm</location>
    </subcellularLocation>
    <text evidence="1">About half TF is bound to the ribosome near the polypeptide exit tunnel while the other half is free in the cytoplasm.</text>
</comment>
<comment type="domain">
    <text evidence="1">Consists of 3 domains; the N-terminus binds the ribosome, the middle domain has PPIase activity, while the C-terminus has intrinsic chaperone activity on its own.</text>
</comment>
<comment type="similarity">
    <text evidence="1">Belongs to the FKBP-type PPIase family. Tig subfamily.</text>
</comment>
<reference key="1">
    <citation type="submission" date="2007-04" db="EMBL/GenBank/DDBJ databases">
        <title>Genome sequence of the thermophilic hydrogen-producing bacterium Caldicellulosiruptor saccharolyticus DSM 8903.</title>
        <authorList>
            <person name="Copeland A."/>
            <person name="Lucas S."/>
            <person name="Lapidus A."/>
            <person name="Barry K."/>
            <person name="Detter J.C."/>
            <person name="Glavina del Rio T."/>
            <person name="Hammon N."/>
            <person name="Israni S."/>
            <person name="Dalin E."/>
            <person name="Tice H."/>
            <person name="Pitluck S."/>
            <person name="Kiss H."/>
            <person name="Brettin T."/>
            <person name="Bruce D."/>
            <person name="Han C."/>
            <person name="Schmutz J."/>
            <person name="Larimer F."/>
            <person name="Land M."/>
            <person name="Hauser L."/>
            <person name="Kyrpides N."/>
            <person name="Lykidis A."/>
            <person name="van de Werken H.J.G."/>
            <person name="Verhaart M.R.A."/>
            <person name="VanFossen A.L."/>
            <person name="Lewis D.L."/>
            <person name="Nichols J.D."/>
            <person name="Goorissen H.P."/>
            <person name="van Niel E.W.J."/>
            <person name="Stams F.J.M."/>
            <person name="Willquist K.U."/>
            <person name="Ward D.E."/>
            <person name="van der Oost J."/>
            <person name="Kelly R.M."/>
            <person name="Kengen S.M.W."/>
            <person name="Richardson P."/>
        </authorList>
    </citation>
    <scope>NUCLEOTIDE SEQUENCE [LARGE SCALE GENOMIC DNA]</scope>
    <source>
        <strain>ATCC 43494 / DSM 8903 / Tp8T 6331</strain>
    </source>
</reference>
<protein>
    <recommendedName>
        <fullName evidence="1">Trigger factor</fullName>
        <shortName evidence="1">TF</shortName>
        <ecNumber evidence="1">5.2.1.8</ecNumber>
    </recommendedName>
    <alternativeName>
        <fullName evidence="1">PPIase</fullName>
    </alternativeName>
</protein>
<dbReference type="EC" id="5.2.1.8" evidence="1"/>
<dbReference type="EMBL" id="CP000679">
    <property type="protein sequence ID" value="ABP66494.1"/>
    <property type="molecule type" value="Genomic_DNA"/>
</dbReference>
<dbReference type="RefSeq" id="WP_011916440.1">
    <property type="nucleotide sequence ID" value="NC_009437.1"/>
</dbReference>
<dbReference type="SMR" id="A4XHV9"/>
<dbReference type="STRING" id="351627.Csac_0878"/>
<dbReference type="KEGG" id="csc:Csac_0878"/>
<dbReference type="eggNOG" id="COG0544">
    <property type="taxonomic scope" value="Bacteria"/>
</dbReference>
<dbReference type="HOGENOM" id="CLU_033058_3_2_9"/>
<dbReference type="OrthoDB" id="9767721at2"/>
<dbReference type="Proteomes" id="UP000000256">
    <property type="component" value="Chromosome"/>
</dbReference>
<dbReference type="GO" id="GO:0005737">
    <property type="term" value="C:cytoplasm"/>
    <property type="evidence" value="ECO:0007669"/>
    <property type="project" value="UniProtKB-SubCell"/>
</dbReference>
<dbReference type="GO" id="GO:0003755">
    <property type="term" value="F:peptidyl-prolyl cis-trans isomerase activity"/>
    <property type="evidence" value="ECO:0007669"/>
    <property type="project" value="UniProtKB-UniRule"/>
</dbReference>
<dbReference type="GO" id="GO:0044183">
    <property type="term" value="F:protein folding chaperone"/>
    <property type="evidence" value="ECO:0007669"/>
    <property type="project" value="TreeGrafter"/>
</dbReference>
<dbReference type="GO" id="GO:0043022">
    <property type="term" value="F:ribosome binding"/>
    <property type="evidence" value="ECO:0007669"/>
    <property type="project" value="TreeGrafter"/>
</dbReference>
<dbReference type="GO" id="GO:0051083">
    <property type="term" value="P:'de novo' cotranslational protein folding"/>
    <property type="evidence" value="ECO:0007669"/>
    <property type="project" value="TreeGrafter"/>
</dbReference>
<dbReference type="GO" id="GO:0051301">
    <property type="term" value="P:cell division"/>
    <property type="evidence" value="ECO:0007669"/>
    <property type="project" value="UniProtKB-KW"/>
</dbReference>
<dbReference type="GO" id="GO:0061077">
    <property type="term" value="P:chaperone-mediated protein folding"/>
    <property type="evidence" value="ECO:0007669"/>
    <property type="project" value="TreeGrafter"/>
</dbReference>
<dbReference type="GO" id="GO:0015031">
    <property type="term" value="P:protein transport"/>
    <property type="evidence" value="ECO:0007669"/>
    <property type="project" value="UniProtKB-UniRule"/>
</dbReference>
<dbReference type="GO" id="GO:0043335">
    <property type="term" value="P:protein unfolding"/>
    <property type="evidence" value="ECO:0007669"/>
    <property type="project" value="TreeGrafter"/>
</dbReference>
<dbReference type="FunFam" id="3.10.50.40:FF:000001">
    <property type="entry name" value="Trigger factor"/>
    <property type="match status" value="1"/>
</dbReference>
<dbReference type="Gene3D" id="3.10.50.40">
    <property type="match status" value="1"/>
</dbReference>
<dbReference type="Gene3D" id="3.30.70.1050">
    <property type="entry name" value="Trigger factor ribosome-binding domain"/>
    <property type="match status" value="1"/>
</dbReference>
<dbReference type="Gene3D" id="1.10.3120.10">
    <property type="entry name" value="Trigger factor, C-terminal domain"/>
    <property type="match status" value="1"/>
</dbReference>
<dbReference type="HAMAP" id="MF_00303">
    <property type="entry name" value="Trigger_factor_Tig"/>
    <property type="match status" value="1"/>
</dbReference>
<dbReference type="InterPro" id="IPR046357">
    <property type="entry name" value="PPIase_dom_sf"/>
</dbReference>
<dbReference type="InterPro" id="IPR001179">
    <property type="entry name" value="PPIase_FKBP_dom"/>
</dbReference>
<dbReference type="InterPro" id="IPR005215">
    <property type="entry name" value="Trig_fac"/>
</dbReference>
<dbReference type="InterPro" id="IPR008880">
    <property type="entry name" value="Trigger_fac_C"/>
</dbReference>
<dbReference type="InterPro" id="IPR037041">
    <property type="entry name" value="Trigger_fac_C_sf"/>
</dbReference>
<dbReference type="InterPro" id="IPR008881">
    <property type="entry name" value="Trigger_fac_ribosome-bd_bac"/>
</dbReference>
<dbReference type="InterPro" id="IPR036611">
    <property type="entry name" value="Trigger_fac_ribosome-bd_sf"/>
</dbReference>
<dbReference type="InterPro" id="IPR027304">
    <property type="entry name" value="Trigger_fact/SurA_dom_sf"/>
</dbReference>
<dbReference type="NCBIfam" id="TIGR00115">
    <property type="entry name" value="tig"/>
    <property type="match status" value="1"/>
</dbReference>
<dbReference type="PANTHER" id="PTHR30560">
    <property type="entry name" value="TRIGGER FACTOR CHAPERONE AND PEPTIDYL-PROLYL CIS/TRANS ISOMERASE"/>
    <property type="match status" value="1"/>
</dbReference>
<dbReference type="PANTHER" id="PTHR30560:SF3">
    <property type="entry name" value="TRIGGER FACTOR-LIKE PROTEIN TIG, CHLOROPLASTIC"/>
    <property type="match status" value="1"/>
</dbReference>
<dbReference type="Pfam" id="PF00254">
    <property type="entry name" value="FKBP_C"/>
    <property type="match status" value="1"/>
</dbReference>
<dbReference type="Pfam" id="PF05698">
    <property type="entry name" value="Trigger_C"/>
    <property type="match status" value="1"/>
</dbReference>
<dbReference type="Pfam" id="PF05697">
    <property type="entry name" value="Trigger_N"/>
    <property type="match status" value="1"/>
</dbReference>
<dbReference type="PIRSF" id="PIRSF003095">
    <property type="entry name" value="Trigger_factor"/>
    <property type="match status" value="1"/>
</dbReference>
<dbReference type="SUPFAM" id="SSF54534">
    <property type="entry name" value="FKBP-like"/>
    <property type="match status" value="1"/>
</dbReference>
<dbReference type="SUPFAM" id="SSF109998">
    <property type="entry name" value="Triger factor/SurA peptide-binding domain-like"/>
    <property type="match status" value="1"/>
</dbReference>
<dbReference type="SUPFAM" id="SSF102735">
    <property type="entry name" value="Trigger factor ribosome-binding domain"/>
    <property type="match status" value="1"/>
</dbReference>
<dbReference type="PROSITE" id="PS50059">
    <property type="entry name" value="FKBP_PPIASE"/>
    <property type="match status" value="1"/>
</dbReference>
<feature type="chain" id="PRO_1000022659" description="Trigger factor">
    <location>
        <begin position="1"/>
        <end position="438"/>
    </location>
</feature>
<feature type="domain" description="PPIase FKBP-type" evidence="1">
    <location>
        <begin position="162"/>
        <end position="247"/>
    </location>
</feature>
<accession>A4XHV9</accession>
<proteinExistence type="inferred from homology"/>
<keyword id="KW-0131">Cell cycle</keyword>
<keyword id="KW-0132">Cell division</keyword>
<keyword id="KW-0143">Chaperone</keyword>
<keyword id="KW-0963">Cytoplasm</keyword>
<keyword id="KW-0413">Isomerase</keyword>
<keyword id="KW-0697">Rotamase</keyword>
<sequence>MEFKVEKKGTNKAVIEVEVEPEKFEEGLQKSYLKNAKYFKIPGFRPGKAPRSLIERAYGEEVFYDDAIDYVLNETYPKVIEESKLEVVSRPEVDIVQVGKGKSFIYKAEVYIKPEFGLGEYKGVEIKKIEYPVAEEEVEHELEHLREENARFISVDREVQNGDIVTIDFEGFVDGESIENGSAQDYELTIGSGRFIPGFEEQLIGIKKGEEKEIEVVFPEDYQSQELAGKKATFKVKVKEIKVKELPELDDEFAKDVSEYETLEELKASIRNRIKEKNDKRAKDEMIDAILEKIAQATEIDIPEPMIENQINYYVEDVVRNLQYFGMTYEKYLEAIGKTDKEFREQFRERATKAIRNNLILEKIAKVENIQATDEELEKELERLAKMYNLEVEKLKERLSEDDIEYIKEGIILNKAIDFIYENAKIISEETQSESQPE</sequence>
<name>TIG_CALS8</name>
<gene>
    <name evidence="1" type="primary">tig</name>
    <name type="ordered locus">Csac_0878</name>
</gene>
<evidence type="ECO:0000255" key="1">
    <source>
        <dbReference type="HAMAP-Rule" id="MF_00303"/>
    </source>
</evidence>
<organism>
    <name type="scientific">Caldicellulosiruptor saccharolyticus (strain ATCC 43494 / DSM 8903 / Tp8T 6331)</name>
    <dbReference type="NCBI Taxonomy" id="351627"/>
    <lineage>
        <taxon>Bacteria</taxon>
        <taxon>Bacillati</taxon>
        <taxon>Bacillota</taxon>
        <taxon>Bacillota incertae sedis</taxon>
        <taxon>Caldicellulosiruptorales</taxon>
        <taxon>Caldicellulosiruptoraceae</taxon>
        <taxon>Caldicellulosiruptor</taxon>
    </lineage>
</organism>